<reference key="1">
    <citation type="journal article" date="2003" name="Nature">
        <title>The genome sequence of the filamentous fungus Neurospora crassa.</title>
        <authorList>
            <person name="Galagan J.E."/>
            <person name="Calvo S.E."/>
            <person name="Borkovich K.A."/>
            <person name="Selker E.U."/>
            <person name="Read N.D."/>
            <person name="Jaffe D.B."/>
            <person name="FitzHugh W."/>
            <person name="Ma L.-J."/>
            <person name="Smirnov S."/>
            <person name="Purcell S."/>
            <person name="Rehman B."/>
            <person name="Elkins T."/>
            <person name="Engels R."/>
            <person name="Wang S."/>
            <person name="Nielsen C.B."/>
            <person name="Butler J."/>
            <person name="Endrizzi M."/>
            <person name="Qui D."/>
            <person name="Ianakiev P."/>
            <person name="Bell-Pedersen D."/>
            <person name="Nelson M.A."/>
            <person name="Werner-Washburne M."/>
            <person name="Selitrennikoff C.P."/>
            <person name="Kinsey J.A."/>
            <person name="Braun E.L."/>
            <person name="Zelter A."/>
            <person name="Schulte U."/>
            <person name="Kothe G.O."/>
            <person name="Jedd G."/>
            <person name="Mewes H.-W."/>
            <person name="Staben C."/>
            <person name="Marcotte E."/>
            <person name="Greenberg D."/>
            <person name="Roy A."/>
            <person name="Foley K."/>
            <person name="Naylor J."/>
            <person name="Stange-Thomann N."/>
            <person name="Barrett R."/>
            <person name="Gnerre S."/>
            <person name="Kamal M."/>
            <person name="Kamvysselis M."/>
            <person name="Mauceli E.W."/>
            <person name="Bielke C."/>
            <person name="Rudd S."/>
            <person name="Frishman D."/>
            <person name="Krystofova S."/>
            <person name="Rasmussen C."/>
            <person name="Metzenberg R.L."/>
            <person name="Perkins D.D."/>
            <person name="Kroken S."/>
            <person name="Cogoni C."/>
            <person name="Macino G."/>
            <person name="Catcheside D.E.A."/>
            <person name="Li W."/>
            <person name="Pratt R.J."/>
            <person name="Osmani S.A."/>
            <person name="DeSouza C.P.C."/>
            <person name="Glass N.L."/>
            <person name="Orbach M.J."/>
            <person name="Berglund J.A."/>
            <person name="Voelker R."/>
            <person name="Yarden O."/>
            <person name="Plamann M."/>
            <person name="Seiler S."/>
            <person name="Dunlap J.C."/>
            <person name="Radford A."/>
            <person name="Aramayo R."/>
            <person name="Natvig D.O."/>
            <person name="Alex L.A."/>
            <person name="Mannhaupt G."/>
            <person name="Ebbole D.J."/>
            <person name="Freitag M."/>
            <person name="Paulsen I."/>
            <person name="Sachs M.S."/>
            <person name="Lander E.S."/>
            <person name="Nusbaum C."/>
            <person name="Birren B.W."/>
        </authorList>
    </citation>
    <scope>NUCLEOTIDE SEQUENCE [LARGE SCALE GENOMIC DNA]</scope>
    <source>
        <strain>ATCC 24698 / 74-OR23-1A / CBS 708.71 / DSM 1257 / FGSC 987</strain>
    </source>
</reference>
<reference key="2">
    <citation type="journal article" date="1979" name="Eur. J. Biochem.">
        <title>Isolation of mitochondrial succinate: ubiquinone reductase, cytochrome c reductase and cytochrome c oxidase from Neurospora crassa using nonionic detergent.</title>
        <authorList>
            <person name="Weiss H."/>
            <person name="Kolb H.J."/>
        </authorList>
    </citation>
    <scope>SUBUNIT</scope>
    <scope>SUBCELLULAR LOCATION</scope>
</reference>
<reference key="3">
    <citation type="journal article" date="1981" name="J. Mol. Biol.">
        <title>Three-dimensional structure of ubiquinol:cytochrome c reductase from Neurospora mitochondria determined by electron microscopy of membrane crystals.</title>
        <authorList>
            <person name="Leonard K."/>
            <person name="Wingfield P."/>
            <person name="Arad T."/>
            <person name="Weiss H."/>
        </authorList>
    </citation>
    <scope>SUBUNIT</scope>
</reference>
<reference key="4">
    <citation type="journal article" date="1983" name="J. Bioenerg. Biomembr.">
        <title>Comparative study of the peptide composition of Complex III (quinol-cytochrome c reductase).</title>
        <authorList>
            <person name="Mendel-Hartvig I."/>
            <person name="Nelson B.D."/>
        </authorList>
    </citation>
    <scope>SUBUNIT</scope>
</reference>
<reference key="5">
    <citation type="journal article" date="1983" name="J. Mol. Biol.">
        <title>Structural studies of cytochrome reductase. Subunit topography determined by electron microscopy of membrane crystals of a subcomplex.</title>
        <authorList>
            <person name="Karlsson B."/>
            <person name="Hovmoeller S."/>
            <person name="Weiss H."/>
            <person name="Leonard K."/>
        </authorList>
    </citation>
    <scope>SUBUNIT</scope>
</reference>
<reference key="6">
    <citation type="journal article" date="1986" name="Eur. J. Biochem.">
        <title>Dimeric ubiquinol:cytochrome c reductase of Neurospora mitochondria contains one cooperative ubiquinone-reduction centre.</title>
        <authorList>
            <person name="Linke P."/>
            <person name="Bechmann G."/>
            <person name="Gothe A."/>
            <person name="Weiss H."/>
        </authorList>
    </citation>
    <scope>FUNCTION OF COMPLEX III</scope>
</reference>
<reference key="7">
    <citation type="journal article" date="1991" name="Eur. J. Biochem.">
        <title>Regulation of the proton/electron stoichiometry of mitochondrial ubiquinol:cytochrome c reductase by the membrane potential.</title>
        <authorList>
            <person name="Bechmann G."/>
            <person name="Weiss H."/>
        </authorList>
    </citation>
    <scope>FUNCTION OF COMPLEX III</scope>
</reference>
<reference key="8">
    <citation type="journal article" date="2007" name="Eukaryot. Cell">
        <title>Supramolecular organization of the respiratory chain in Neurospora crassa mitochondria.</title>
        <authorList>
            <person name="Marques I."/>
            <person name="Dencher N.A."/>
            <person name="Videira A."/>
            <person name="Krause F."/>
        </authorList>
    </citation>
    <scope>SUBUNIT</scope>
</reference>
<reference key="9">
    <citation type="journal article" date="2009" name="Mol. Microbiol.">
        <title>Effects of mitochondrial complex III disruption in the respiratory chain of Neurospora crassa.</title>
        <authorList>
            <person name="Duarte M."/>
            <person name="Videira A."/>
        </authorList>
    </citation>
    <scope>FUNCTION OF COMPLEX III</scope>
    <scope>SUBUNIT</scope>
</reference>
<protein>
    <recommendedName>
        <fullName>Cytochrome b-c1 complex subunit 6, mitochondrial</fullName>
    </recommendedName>
    <alternativeName>
        <fullName>Complex III subunit 6</fullName>
    </alternativeName>
    <alternativeName>
        <fullName evidence="10">Complex III subunit VI</fullName>
    </alternativeName>
    <alternativeName>
        <fullName>Ubiquinol-cytochrome c oxidoreductase subunit 6</fullName>
    </alternativeName>
    <alternativeName>
        <fullName>Ubiquinol-cytochrome c reductase complex 14 kDa protein</fullName>
    </alternativeName>
</protein>
<feature type="chain" id="PRO_0000449192" description="Cytochrome b-c1 complex subunit 6, mitochondrial">
    <location>
        <begin position="1"/>
        <end position="141"/>
    </location>
</feature>
<feature type="region of interest" description="Disordered" evidence="2">
    <location>
        <begin position="18"/>
        <end position="94"/>
    </location>
</feature>
<feature type="compositionally biased region" description="Low complexity" evidence="2">
    <location>
        <begin position="18"/>
        <end position="37"/>
    </location>
</feature>
<feature type="compositionally biased region" description="Acidic residues" evidence="2">
    <location>
        <begin position="56"/>
        <end position="75"/>
    </location>
</feature>
<feature type="compositionally biased region" description="Basic and acidic residues" evidence="2">
    <location>
        <begin position="76"/>
        <end position="94"/>
    </location>
</feature>
<feature type="disulfide bond" evidence="1">
    <location>
        <begin position="102"/>
        <end position="117"/>
    </location>
</feature>
<feature type="splice variant" id="VSP_060522" description="In isoform 2." evidence="12">
    <original>MGFWDAVTDLIDAATPWATVEAEAPADTPAE</original>
    <variation>M</variation>
    <location>
        <begin position="1"/>
        <end position="31"/>
    </location>
</feature>
<sequence>MGFWDAVTDLIDAATPWATVEAEAPADTPAETAPASESTEETTAETKAEESAPAAEEPEEEAEEEEEEEEDEDEIVDPKETLEEECRNSKECAPAKHHYDECAARVTGAGADNKEDCVEEFFHLVHCATQCAAPKLWNTLK</sequence>
<proteinExistence type="evidence at protein level"/>
<dbReference type="EMBL" id="CM002241">
    <property type="protein sequence ID" value="ESA42284.1"/>
    <property type="molecule type" value="Genomic_DNA"/>
</dbReference>
<dbReference type="EMBL" id="CM002241">
    <property type="protein sequence ID" value="ESA42285.1"/>
    <property type="molecule type" value="Genomic_DNA"/>
</dbReference>
<dbReference type="RefSeq" id="XP_011394985.1">
    <molecule id="V5IM94-1"/>
    <property type="nucleotide sequence ID" value="XM_011396683.1"/>
</dbReference>
<dbReference type="RefSeq" id="XP_011394986.1">
    <molecule id="V5IM94-2"/>
    <property type="nucleotide sequence ID" value="XM_011396684.1"/>
</dbReference>
<dbReference type="SMR" id="V5IM94"/>
<dbReference type="STRING" id="367110.V5IM94"/>
<dbReference type="PaxDb" id="5141-EFNCRP00000001545"/>
<dbReference type="EnsemblFungi" id="ESA42284">
    <molecule id="V5IM94-1"/>
    <property type="protein sequence ID" value="ESA42284"/>
    <property type="gene ID" value="NCU05989"/>
</dbReference>
<dbReference type="EnsemblFungi" id="ESA42285">
    <molecule id="V5IM94-2"/>
    <property type="protein sequence ID" value="ESA42285"/>
    <property type="gene ID" value="NCU05989"/>
</dbReference>
<dbReference type="GeneID" id="3874042"/>
<dbReference type="KEGG" id="ncr:NCU05989"/>
<dbReference type="VEuPathDB" id="FungiDB:NCU05989"/>
<dbReference type="HOGENOM" id="CLU_115913_0_2_1"/>
<dbReference type="InParanoid" id="V5IM94"/>
<dbReference type="OrthoDB" id="405848at2759"/>
<dbReference type="Proteomes" id="UP000001805">
    <property type="component" value="Chromosome 5, Linkage Group VI"/>
</dbReference>
<dbReference type="GO" id="GO:0005743">
    <property type="term" value="C:mitochondrial inner membrane"/>
    <property type="evidence" value="ECO:0007669"/>
    <property type="project" value="UniProtKB-SubCell"/>
</dbReference>
<dbReference type="GO" id="GO:0045275">
    <property type="term" value="C:respiratory chain complex III"/>
    <property type="evidence" value="ECO:0000318"/>
    <property type="project" value="GO_Central"/>
</dbReference>
<dbReference type="GO" id="GO:0006122">
    <property type="term" value="P:mitochondrial electron transport, ubiquinol to cytochrome c"/>
    <property type="evidence" value="ECO:0000318"/>
    <property type="project" value="GO_Central"/>
</dbReference>
<dbReference type="FunFam" id="1.10.287.20:FF:000003">
    <property type="entry name" value="Cytochrome b-c1 complex subunit 6"/>
    <property type="match status" value="1"/>
</dbReference>
<dbReference type="Gene3D" id="1.10.287.20">
    <property type="entry name" value="Ubiquinol-cytochrome C reductase hinge domain"/>
    <property type="match status" value="1"/>
</dbReference>
<dbReference type="InterPro" id="IPR003422">
    <property type="entry name" value="Cyt_b-c1_6"/>
</dbReference>
<dbReference type="InterPro" id="IPR023184">
    <property type="entry name" value="Ubol_cytC_Rdtase_hinge_dom"/>
</dbReference>
<dbReference type="InterPro" id="IPR036811">
    <property type="entry name" value="Ubol_cytC_Rdtase_hinge_dom_sf"/>
</dbReference>
<dbReference type="PANTHER" id="PTHR15336:SF0">
    <property type="entry name" value="CYTOCHROME B-C1 COMPLEX SUBUNIT 6, MITOCHONDRIAL"/>
    <property type="match status" value="1"/>
</dbReference>
<dbReference type="PANTHER" id="PTHR15336">
    <property type="entry name" value="UBIQUINOL-CYTOCHROME C REDUCTASE COMPLEX 7.8 KDA PROTEIN"/>
    <property type="match status" value="1"/>
</dbReference>
<dbReference type="Pfam" id="PF02320">
    <property type="entry name" value="UCR_hinge"/>
    <property type="match status" value="1"/>
</dbReference>
<dbReference type="SUPFAM" id="SSF81531">
    <property type="entry name" value="Non-heme 11 kDa protein of cytochrome bc1 complex (Ubiquinol-cytochrome c reductase)"/>
    <property type="match status" value="1"/>
</dbReference>
<organism>
    <name type="scientific">Neurospora crassa (strain ATCC 24698 / 74-OR23-1A / CBS 708.71 / DSM 1257 / FGSC 987)</name>
    <dbReference type="NCBI Taxonomy" id="367110"/>
    <lineage>
        <taxon>Eukaryota</taxon>
        <taxon>Fungi</taxon>
        <taxon>Dikarya</taxon>
        <taxon>Ascomycota</taxon>
        <taxon>Pezizomycotina</taxon>
        <taxon>Sordariomycetes</taxon>
        <taxon>Sordariomycetidae</taxon>
        <taxon>Sordariales</taxon>
        <taxon>Sordariaceae</taxon>
        <taxon>Neurospora</taxon>
    </lineage>
</organism>
<evidence type="ECO:0000250" key="1">
    <source>
        <dbReference type="UniProtKB" id="P00127"/>
    </source>
</evidence>
<evidence type="ECO:0000256" key="2">
    <source>
        <dbReference type="SAM" id="MobiDB-lite"/>
    </source>
</evidence>
<evidence type="ECO:0000269" key="3">
    <source>
    </source>
</evidence>
<evidence type="ECO:0000269" key="4">
    <source>
    </source>
</evidence>
<evidence type="ECO:0000269" key="5">
    <source>
    </source>
</evidence>
<evidence type="ECO:0000269" key="6">
    <source>
    </source>
</evidence>
<evidence type="ECO:0000269" key="7">
    <source>
    </source>
</evidence>
<evidence type="ECO:0000269" key="8">
    <source>
    </source>
</evidence>
<evidence type="ECO:0000269" key="9">
    <source>
    </source>
</evidence>
<evidence type="ECO:0000303" key="10">
    <source>
    </source>
</evidence>
<evidence type="ECO:0000305" key="11"/>
<evidence type="ECO:0000305" key="12">
    <source>
    </source>
</evidence>
<evidence type="ECO:0000305" key="13">
    <source>
    </source>
</evidence>
<evidence type="ECO:0000305" key="14">
    <source>
    </source>
</evidence>
<accession>V5IM94</accession>
<accession>V5ILN4</accession>
<gene>
    <name type="primary">qcr6</name>
    <name type="ORF">NCU05989</name>
</gene>
<name>QCR6_NEUCR</name>
<comment type="function">
    <text evidence="7 13 14">Component of the ubiquinol-cytochrome c oxidoreductase, a multisubunit transmembrane complex that is part of the mitochondrial electron transport chain which drives oxidative phosphorylation. The respiratory chain contains 3 multisubunit complexes succinate dehydrogenase (complex II, CII), ubiquinol-cytochrome c oxidoreductase (cytochrome b-c1 complex, complex III, CIII) and cytochrome c oxidase (complex IV, CIV), that cooperate to transfer electrons derived from NADH and succinate to molecular oxygen, creating an electrochemical gradient over the inner membrane that drives transmembrane transport and the ATP synthase. The cytochrome b-c1 complex catalyzes electron transfer from ubiquinol to cytochrome c, linking this redox reaction to translocation of protons across the mitochondrial inner membrane, with protons being carried across the membrane as hydrogens on the quinol. In the process called Q cycle, 2 protons are consumed from the matrix, 4 protons are released into the intermembrane space and 2 electrons are passed to cytochrome c.</text>
</comment>
<comment type="subunit">
    <text evidence="3 4 5 6 8 9">Component of the ubiquinol-cytochrome c oxidoreductase (cytochrome b-c1 complex, complex III, CIII), a multisubunit enzyme composed of 10 subunits. The complex is composed of 3 respiratory subunits cytochrome b (cob), cytochrome c1 (cyt-1) and Rieske protein (fes-1), 2 core protein subunits pep and ucr-1, and 5 low-molecular weight protein subunits qcr6, qcr7, qcr8, qcr9 and probably NCU16844/qcr10 (PubMed:18251112, PubMed:226365, PubMed:6273583, PubMed:6302289). The complex exists as an obligatory dimer and forms supercomplexes (SCs) in the inner mitochondrial membrane with NADH-ubiquinone oxidoreductase (complex I, CI) and cytochrome c oxidase (complex IV, CIV), resulting in different assemblies (supercomplexes SCI(1)III(2), SCIII(2)IV(1) and SCIII(2)IV(2) as well as higher order I(x)III(y)IV(z) megacomplexes) (PubMed:17873079, PubMed:19239619).</text>
</comment>
<comment type="subcellular location">
    <subcellularLocation>
        <location evidence="6">Mitochondrion inner membrane</location>
        <topology evidence="1">Peripheral membrane protein</topology>
        <orientation evidence="1">Intermembrane side</orientation>
    </subcellularLocation>
</comment>
<comment type="alternative products">
    <event type="alternative splicing"/>
    <isoform>
        <id>V5IM94-1</id>
        <name>1</name>
        <sequence type="displayed"/>
    </isoform>
    <isoform>
        <id>V5IM94-2</id>
        <name>2</name>
        <sequence type="described" ref="VSP_060522"/>
    </isoform>
</comment>
<comment type="similarity">
    <text evidence="11">Belongs to the UQCRH/QCR6 family.</text>
</comment>
<keyword id="KW-0025">Alternative splicing</keyword>
<keyword id="KW-1015">Disulfide bond</keyword>
<keyword id="KW-0249">Electron transport</keyword>
<keyword id="KW-0472">Membrane</keyword>
<keyword id="KW-0496">Mitochondrion</keyword>
<keyword id="KW-0999">Mitochondrion inner membrane</keyword>
<keyword id="KW-1185">Reference proteome</keyword>
<keyword id="KW-0679">Respiratory chain</keyword>
<keyword id="KW-0813">Transport</keyword>